<name>UPP_SALRD</name>
<comment type="function">
    <text evidence="1">Catalyzes the conversion of uracil and 5-phospho-alpha-D-ribose 1-diphosphate (PRPP) to UMP and diphosphate.</text>
</comment>
<comment type="catalytic activity">
    <reaction evidence="1">
        <text>UMP + diphosphate = 5-phospho-alpha-D-ribose 1-diphosphate + uracil</text>
        <dbReference type="Rhea" id="RHEA:13017"/>
        <dbReference type="ChEBI" id="CHEBI:17568"/>
        <dbReference type="ChEBI" id="CHEBI:33019"/>
        <dbReference type="ChEBI" id="CHEBI:57865"/>
        <dbReference type="ChEBI" id="CHEBI:58017"/>
        <dbReference type="EC" id="2.4.2.9"/>
    </reaction>
</comment>
<comment type="cofactor">
    <cofactor evidence="1">
        <name>Mg(2+)</name>
        <dbReference type="ChEBI" id="CHEBI:18420"/>
    </cofactor>
    <text evidence="1">Binds 1 Mg(2+) ion per subunit. The magnesium is bound as Mg-PRPP.</text>
</comment>
<comment type="activity regulation">
    <text evidence="1">Allosterically activated by GTP.</text>
</comment>
<comment type="pathway">
    <text evidence="1">Pyrimidine metabolism; UMP biosynthesis via salvage pathway; UMP from uracil: step 1/1.</text>
</comment>
<comment type="similarity">
    <text evidence="1">Belongs to the UPRTase family.</text>
</comment>
<dbReference type="EC" id="2.4.2.9" evidence="1"/>
<dbReference type="EMBL" id="CP000159">
    <property type="protein sequence ID" value="ABC45551.1"/>
    <property type="molecule type" value="Genomic_DNA"/>
</dbReference>
<dbReference type="RefSeq" id="WP_011404039.1">
    <property type="nucleotide sequence ID" value="NC_007677.1"/>
</dbReference>
<dbReference type="RefSeq" id="YP_445411.1">
    <property type="nucleotide sequence ID" value="NC_007677.1"/>
</dbReference>
<dbReference type="SMR" id="Q2S320"/>
<dbReference type="STRING" id="309807.SRU_1287"/>
<dbReference type="EnsemblBacteria" id="ABC45551">
    <property type="protein sequence ID" value="ABC45551"/>
    <property type="gene ID" value="SRU_1287"/>
</dbReference>
<dbReference type="GeneID" id="83728201"/>
<dbReference type="KEGG" id="sru:SRU_1287"/>
<dbReference type="PATRIC" id="fig|309807.25.peg.1338"/>
<dbReference type="eggNOG" id="COG0035">
    <property type="taxonomic scope" value="Bacteria"/>
</dbReference>
<dbReference type="HOGENOM" id="CLU_067096_2_2_10"/>
<dbReference type="OrthoDB" id="9781675at2"/>
<dbReference type="UniPathway" id="UPA00574">
    <property type="reaction ID" value="UER00636"/>
</dbReference>
<dbReference type="Proteomes" id="UP000008674">
    <property type="component" value="Chromosome"/>
</dbReference>
<dbReference type="GO" id="GO:0005525">
    <property type="term" value="F:GTP binding"/>
    <property type="evidence" value="ECO:0007669"/>
    <property type="project" value="UniProtKB-KW"/>
</dbReference>
<dbReference type="GO" id="GO:0000287">
    <property type="term" value="F:magnesium ion binding"/>
    <property type="evidence" value="ECO:0007669"/>
    <property type="project" value="UniProtKB-UniRule"/>
</dbReference>
<dbReference type="GO" id="GO:0004845">
    <property type="term" value="F:uracil phosphoribosyltransferase activity"/>
    <property type="evidence" value="ECO:0007669"/>
    <property type="project" value="UniProtKB-UniRule"/>
</dbReference>
<dbReference type="GO" id="GO:0044206">
    <property type="term" value="P:UMP salvage"/>
    <property type="evidence" value="ECO:0007669"/>
    <property type="project" value="UniProtKB-UniRule"/>
</dbReference>
<dbReference type="GO" id="GO:0006223">
    <property type="term" value="P:uracil salvage"/>
    <property type="evidence" value="ECO:0007669"/>
    <property type="project" value="InterPro"/>
</dbReference>
<dbReference type="CDD" id="cd06223">
    <property type="entry name" value="PRTases_typeI"/>
    <property type="match status" value="1"/>
</dbReference>
<dbReference type="FunFam" id="3.40.50.2020:FF:000003">
    <property type="entry name" value="Uracil phosphoribosyltransferase"/>
    <property type="match status" value="1"/>
</dbReference>
<dbReference type="Gene3D" id="3.40.50.2020">
    <property type="match status" value="1"/>
</dbReference>
<dbReference type="HAMAP" id="MF_01218_B">
    <property type="entry name" value="Upp_B"/>
    <property type="match status" value="1"/>
</dbReference>
<dbReference type="InterPro" id="IPR000836">
    <property type="entry name" value="PRibTrfase_dom"/>
</dbReference>
<dbReference type="InterPro" id="IPR029057">
    <property type="entry name" value="PRTase-like"/>
</dbReference>
<dbReference type="InterPro" id="IPR034332">
    <property type="entry name" value="Upp_B"/>
</dbReference>
<dbReference type="InterPro" id="IPR050054">
    <property type="entry name" value="UPRTase/APRTase"/>
</dbReference>
<dbReference type="InterPro" id="IPR005765">
    <property type="entry name" value="Ura_phspho_trans"/>
</dbReference>
<dbReference type="NCBIfam" id="NF001097">
    <property type="entry name" value="PRK00129.1"/>
    <property type="match status" value="1"/>
</dbReference>
<dbReference type="NCBIfam" id="TIGR01091">
    <property type="entry name" value="upp"/>
    <property type="match status" value="1"/>
</dbReference>
<dbReference type="PANTHER" id="PTHR32315">
    <property type="entry name" value="ADENINE PHOSPHORIBOSYLTRANSFERASE"/>
    <property type="match status" value="1"/>
</dbReference>
<dbReference type="PANTHER" id="PTHR32315:SF4">
    <property type="entry name" value="URACIL PHOSPHORIBOSYLTRANSFERASE, CHLOROPLASTIC"/>
    <property type="match status" value="1"/>
</dbReference>
<dbReference type="Pfam" id="PF14681">
    <property type="entry name" value="UPRTase"/>
    <property type="match status" value="1"/>
</dbReference>
<dbReference type="SUPFAM" id="SSF53271">
    <property type="entry name" value="PRTase-like"/>
    <property type="match status" value="1"/>
</dbReference>
<feature type="chain" id="PRO_1000085637" description="Uracil phosphoribosyltransferase">
    <location>
        <begin position="1"/>
        <end position="210"/>
    </location>
</feature>
<feature type="binding site" evidence="1">
    <location>
        <position position="78"/>
    </location>
    <ligand>
        <name>5-phospho-alpha-D-ribose 1-diphosphate</name>
        <dbReference type="ChEBI" id="CHEBI:58017"/>
    </ligand>
</feature>
<feature type="binding site" evidence="1">
    <location>
        <position position="103"/>
    </location>
    <ligand>
        <name>5-phospho-alpha-D-ribose 1-diphosphate</name>
        <dbReference type="ChEBI" id="CHEBI:58017"/>
    </ligand>
</feature>
<feature type="binding site" evidence="1">
    <location>
        <begin position="130"/>
        <end position="138"/>
    </location>
    <ligand>
        <name>5-phospho-alpha-D-ribose 1-diphosphate</name>
        <dbReference type="ChEBI" id="CHEBI:58017"/>
    </ligand>
</feature>
<feature type="binding site" evidence="1">
    <location>
        <position position="193"/>
    </location>
    <ligand>
        <name>uracil</name>
        <dbReference type="ChEBI" id="CHEBI:17568"/>
    </ligand>
</feature>
<feature type="binding site" evidence="1">
    <location>
        <begin position="198"/>
        <end position="200"/>
    </location>
    <ligand>
        <name>uracil</name>
        <dbReference type="ChEBI" id="CHEBI:17568"/>
    </ligand>
</feature>
<feature type="binding site" evidence="1">
    <location>
        <position position="199"/>
    </location>
    <ligand>
        <name>5-phospho-alpha-D-ribose 1-diphosphate</name>
        <dbReference type="ChEBI" id="CHEBI:58017"/>
    </ligand>
</feature>
<organism>
    <name type="scientific">Salinibacter ruber (strain DSM 13855 / M31)</name>
    <dbReference type="NCBI Taxonomy" id="309807"/>
    <lineage>
        <taxon>Bacteria</taxon>
        <taxon>Pseudomonadati</taxon>
        <taxon>Rhodothermota</taxon>
        <taxon>Rhodothermia</taxon>
        <taxon>Rhodothermales</taxon>
        <taxon>Salinibacteraceae</taxon>
        <taxon>Salinibacter</taxon>
    </lineage>
</organism>
<protein>
    <recommendedName>
        <fullName evidence="1">Uracil phosphoribosyltransferase</fullName>
        <ecNumber evidence="1">2.4.2.9</ecNumber>
    </recommendedName>
    <alternativeName>
        <fullName evidence="1">UMP pyrophosphorylase</fullName>
    </alternativeName>
    <alternativeName>
        <fullName evidence="1">UPRTase</fullName>
    </alternativeName>
</protein>
<proteinExistence type="inferred from homology"/>
<accession>Q2S320</accession>
<gene>
    <name evidence="1" type="primary">upp</name>
    <name type="ordered locus">SRU_1287</name>
</gene>
<reference key="1">
    <citation type="journal article" date="2005" name="Proc. Natl. Acad. Sci. U.S.A.">
        <title>The genome of Salinibacter ruber: convergence and gene exchange among hyperhalophilic bacteria and archaea.</title>
        <authorList>
            <person name="Mongodin E.F."/>
            <person name="Nelson K.E."/>
            <person name="Daugherty S."/>
            <person name="DeBoy R.T."/>
            <person name="Wister J."/>
            <person name="Khouri H."/>
            <person name="Weidman J."/>
            <person name="Walsh D.A."/>
            <person name="Papke R.T."/>
            <person name="Sanchez Perez G."/>
            <person name="Sharma A.K."/>
            <person name="Nesbo C.L."/>
            <person name="MacLeod D."/>
            <person name="Bapteste E."/>
            <person name="Doolittle W.F."/>
            <person name="Charlebois R.L."/>
            <person name="Legault B."/>
            <person name="Rodriguez-Valera F."/>
        </authorList>
    </citation>
    <scope>NUCLEOTIDE SEQUENCE [LARGE SCALE GENOMIC DNA]</scope>
    <source>
        <strain>DSM 13855 / CECT 5946 / M31</strain>
    </source>
</reference>
<evidence type="ECO:0000255" key="1">
    <source>
        <dbReference type="HAMAP-Rule" id="MF_01218"/>
    </source>
</evidence>
<keyword id="KW-0021">Allosteric enzyme</keyword>
<keyword id="KW-0328">Glycosyltransferase</keyword>
<keyword id="KW-0342">GTP-binding</keyword>
<keyword id="KW-0460">Magnesium</keyword>
<keyword id="KW-0547">Nucleotide-binding</keyword>
<keyword id="KW-1185">Reference proteome</keyword>
<keyword id="KW-0808">Transferase</keyword>
<sequence>MENVTVVDHPLLKRDLTLLRREETPHGQFRKTVSDAAAILAYEAMRDIELEETSIETPLEQTTGYEIAEEVMVVPIMRAGLGMVDGFVRYVPEARVGHLGMQRDEETYRPVDYYSNIPSTIGHAHVFVVDPMLATGGSASFAIDHLKEEGGQDFTFACLVAAPEGVQKLREEHPDVPVVTAVLDRELDDNAFIRPGLGDAGDRIFGTRES</sequence>